<comment type="cofactor">
    <cofactor evidence="1">
        <name>Zn(2+)</name>
        <dbReference type="ChEBI" id="CHEBI:29105"/>
    </cofactor>
    <text evidence="1">Binds 1 zinc ion.</text>
</comment>
<comment type="subcellular location">
    <subcellularLocation>
        <location evidence="1">Cytoplasm</location>
    </subcellularLocation>
</comment>
<comment type="similarity">
    <text evidence="1">Belongs to the SprT family.</text>
</comment>
<gene>
    <name evidence="1" type="primary">sprT</name>
    <name type="ordered locus">ETA_28280</name>
</gene>
<organism>
    <name type="scientific">Erwinia tasmaniensis (strain DSM 17950 / CFBP 7177 / CIP 109463 / NCPPB 4357 / Et1/99)</name>
    <dbReference type="NCBI Taxonomy" id="465817"/>
    <lineage>
        <taxon>Bacteria</taxon>
        <taxon>Pseudomonadati</taxon>
        <taxon>Pseudomonadota</taxon>
        <taxon>Gammaproteobacteria</taxon>
        <taxon>Enterobacterales</taxon>
        <taxon>Erwiniaceae</taxon>
        <taxon>Erwinia</taxon>
    </lineage>
</organism>
<reference key="1">
    <citation type="journal article" date="2008" name="Environ. Microbiol.">
        <title>The genome of Erwinia tasmaniensis strain Et1/99, a non-pathogenic bacterium in the genus Erwinia.</title>
        <authorList>
            <person name="Kube M."/>
            <person name="Migdoll A.M."/>
            <person name="Mueller I."/>
            <person name="Kuhl H."/>
            <person name="Beck A."/>
            <person name="Reinhardt R."/>
            <person name="Geider K."/>
        </authorList>
    </citation>
    <scope>NUCLEOTIDE SEQUENCE [LARGE SCALE GENOMIC DNA]</scope>
    <source>
        <strain>DSM 17950 / CFBP 7177 / CIP 109463 / NCPPB 4357 / Et1/99</strain>
    </source>
</reference>
<accession>B2VF08</accession>
<keyword id="KW-0963">Cytoplasm</keyword>
<keyword id="KW-0479">Metal-binding</keyword>
<keyword id="KW-1185">Reference proteome</keyword>
<keyword id="KW-0862">Zinc</keyword>
<proteinExistence type="inferred from homology"/>
<name>SPRT_ERWT9</name>
<protein>
    <recommendedName>
        <fullName evidence="1">Protein SprT</fullName>
    </recommendedName>
</protein>
<dbReference type="EMBL" id="CU468135">
    <property type="protein sequence ID" value="CAO97874.1"/>
    <property type="molecule type" value="Genomic_DNA"/>
</dbReference>
<dbReference type="RefSeq" id="WP_012442531.1">
    <property type="nucleotide sequence ID" value="NC_010694.1"/>
</dbReference>
<dbReference type="STRING" id="465817.ETA_28280"/>
<dbReference type="KEGG" id="eta:ETA_28280"/>
<dbReference type="eggNOG" id="COG3091">
    <property type="taxonomic scope" value="Bacteria"/>
</dbReference>
<dbReference type="HOGENOM" id="CLU_113336_0_1_6"/>
<dbReference type="OrthoDB" id="267364at2"/>
<dbReference type="Proteomes" id="UP000001726">
    <property type="component" value="Chromosome"/>
</dbReference>
<dbReference type="GO" id="GO:0005737">
    <property type="term" value="C:cytoplasm"/>
    <property type="evidence" value="ECO:0007669"/>
    <property type="project" value="UniProtKB-SubCell"/>
</dbReference>
<dbReference type="GO" id="GO:0008270">
    <property type="term" value="F:zinc ion binding"/>
    <property type="evidence" value="ECO:0007669"/>
    <property type="project" value="UniProtKB-UniRule"/>
</dbReference>
<dbReference type="GO" id="GO:0006950">
    <property type="term" value="P:response to stress"/>
    <property type="evidence" value="ECO:0007669"/>
    <property type="project" value="UniProtKB-ARBA"/>
</dbReference>
<dbReference type="HAMAP" id="MF_00746">
    <property type="entry name" value="SprT"/>
    <property type="match status" value="1"/>
</dbReference>
<dbReference type="InterPro" id="IPR006640">
    <property type="entry name" value="SprT-like_domain"/>
</dbReference>
<dbReference type="InterPro" id="IPR035240">
    <property type="entry name" value="SprT_Zn_ribbon"/>
</dbReference>
<dbReference type="InterPro" id="IPR023483">
    <property type="entry name" value="Uncharacterised_SprT"/>
</dbReference>
<dbReference type="NCBIfam" id="NF003421">
    <property type="entry name" value="PRK04860.1"/>
    <property type="match status" value="1"/>
</dbReference>
<dbReference type="PANTHER" id="PTHR38773">
    <property type="entry name" value="PROTEIN SPRT"/>
    <property type="match status" value="1"/>
</dbReference>
<dbReference type="PANTHER" id="PTHR38773:SF1">
    <property type="entry name" value="PROTEIN SPRT"/>
    <property type="match status" value="1"/>
</dbReference>
<dbReference type="Pfam" id="PF10263">
    <property type="entry name" value="SprT-like"/>
    <property type="match status" value="1"/>
</dbReference>
<dbReference type="Pfam" id="PF17283">
    <property type="entry name" value="Zn_ribbon_SprT"/>
    <property type="match status" value="1"/>
</dbReference>
<dbReference type="SMART" id="SM00731">
    <property type="entry name" value="SprT"/>
    <property type="match status" value="1"/>
</dbReference>
<dbReference type="PROSITE" id="PS00142">
    <property type="entry name" value="ZINC_PROTEASE"/>
    <property type="match status" value="1"/>
</dbReference>
<sequence>MKPERIPICLQQAVMLRLREKLQQANLRLERNYPEPALHYRQRGTAAGTAWLQSWEIRLNPVLLLENQQAFIDEVVPHELAHLLVWKHFGRVAPHGKEWKWMMESVLGLPARRTHQFAIASVRSRTFPYRCGCQQHQLSVRRHNRVVRGESEYRCLHCGTSLRPGEFQKS</sequence>
<evidence type="ECO:0000255" key="1">
    <source>
        <dbReference type="HAMAP-Rule" id="MF_00746"/>
    </source>
</evidence>
<feature type="chain" id="PRO_1000133242" description="Protein SprT">
    <location>
        <begin position="1"/>
        <end position="170"/>
    </location>
</feature>
<feature type="domain" description="SprT-like" evidence="1">
    <location>
        <begin position="19"/>
        <end position="163"/>
    </location>
</feature>
<feature type="active site" evidence="1">
    <location>
        <position position="79"/>
    </location>
</feature>
<feature type="binding site" evidence="1">
    <location>
        <position position="78"/>
    </location>
    <ligand>
        <name>Zn(2+)</name>
        <dbReference type="ChEBI" id="CHEBI:29105"/>
    </ligand>
</feature>
<feature type="binding site" evidence="1">
    <location>
        <position position="82"/>
    </location>
    <ligand>
        <name>Zn(2+)</name>
        <dbReference type="ChEBI" id="CHEBI:29105"/>
    </ligand>
</feature>